<comment type="interaction">
    <interactant intactId="EBI-10268010">
        <id>Q8N8X9</id>
    </interactant>
    <interactant intactId="EBI-2602396">
        <id>Q9ULW3</id>
        <label>ABT1</label>
    </interactant>
    <organismsDiffer>false</organismsDiffer>
    <experiments>3</experiments>
</comment>
<comment type="interaction">
    <interactant intactId="EBI-10268010">
        <id>Q8N8X9</id>
    </interactant>
    <interactant intactId="EBI-10268037">
        <id>Q6PIK7</id>
        <label>AGGF1</label>
    </interactant>
    <organismsDiffer>false</organismsDiffer>
    <experiments>3</experiments>
</comment>
<comment type="interaction">
    <interactant intactId="EBI-10268010">
        <id>Q8N8X9</id>
    </interactant>
    <interactant intactId="EBI-747899">
        <id>Q8N302</id>
        <label>AGGF1</label>
    </interactant>
    <organismsDiffer>false</organismsDiffer>
    <experiments>4</experiments>
</comment>
<comment type="interaction">
    <interactant intactId="EBI-10268010">
        <id>Q8N8X9</id>
    </interactant>
    <interactant intactId="EBI-12170453">
        <id>Q8N2N9-4</id>
        <label>ANKRD36B</label>
    </interactant>
    <organismsDiffer>false</organismsDiffer>
    <experiments>3</experiments>
</comment>
<comment type="interaction">
    <interactant intactId="EBI-10268010">
        <id>Q8N8X9</id>
    </interactant>
    <interactant intactId="EBI-297683">
        <id>Q96CW1</id>
        <label>AP2M1</label>
    </interactant>
    <organismsDiffer>false</organismsDiffer>
    <experiments>5</experiments>
</comment>
<comment type="interaction">
    <interactant intactId="EBI-10268010">
        <id>Q8N8X9</id>
    </interactant>
    <interactant intactId="EBI-742722">
        <id>Q9BUH8</id>
        <label>BEGAIN</label>
    </interactant>
    <organismsDiffer>false</organismsDiffer>
    <experiments>3</experiments>
</comment>
<comment type="interaction">
    <interactant intactId="EBI-10268010">
        <id>Q8N8X9</id>
    </interactant>
    <interactant intactId="EBI-12051833">
        <id>Q5HYN5</id>
        <label>CT45A1</label>
    </interactant>
    <organismsDiffer>false</organismsDiffer>
    <experiments>3</experiments>
</comment>
<comment type="interaction">
    <interactant intactId="EBI-10268010">
        <id>Q8N8X9</id>
    </interactant>
    <interactant intactId="EBI-739789">
        <id>Q92997</id>
        <label>DVL3</label>
    </interactant>
    <organismsDiffer>false</organismsDiffer>
    <experiments>3</experiments>
</comment>
<comment type="interaction">
    <interactant intactId="EBI-10268010">
        <id>Q8N8X9</id>
    </interactant>
    <interactant intactId="EBI-769261">
        <id>Q96JC9</id>
        <label>EAF1</label>
    </interactant>
    <organismsDiffer>false</organismsDiffer>
    <experiments>3</experiments>
</comment>
<comment type="interaction">
    <interactant intactId="EBI-10268010">
        <id>Q8N8X9</id>
    </interactant>
    <interactant intactId="EBI-2339219">
        <id>Q08426</id>
        <label>EHHADH</label>
    </interactant>
    <organismsDiffer>false</organismsDiffer>
    <experiments>3</experiments>
</comment>
<comment type="interaction">
    <interactant intactId="EBI-10268010">
        <id>Q8N8X9</id>
    </interactant>
    <interactant intactId="EBI-489887">
        <id>P50402</id>
        <label>EMD</label>
    </interactant>
    <organismsDiffer>false</organismsDiffer>
    <experiments>3</experiments>
</comment>
<comment type="interaction">
    <interactant intactId="EBI-10268010">
        <id>Q8N8X9</id>
    </interactant>
    <interactant intactId="EBI-10175124">
        <id>Q8IZU0</id>
        <label>FAM9B</label>
    </interactant>
    <organismsDiffer>false</organismsDiffer>
    <experiments>3</experiments>
</comment>
<comment type="interaction">
    <interactant intactId="EBI-10268010">
        <id>Q8N8X9</id>
    </interactant>
    <interactant intactId="EBI-11977403">
        <id>A0A0C3SFZ9</id>
        <label>FCHO1</label>
    </interactant>
    <organismsDiffer>false</organismsDiffer>
    <experiments>3</experiments>
</comment>
<comment type="interaction">
    <interactant intactId="EBI-10268010">
        <id>Q8N8X9</id>
    </interactant>
    <interactant intactId="EBI-11959863">
        <id>Q9NWQ4-1</id>
        <label>GPATCH2L</label>
    </interactant>
    <organismsDiffer>false</organismsDiffer>
    <experiments>3</experiments>
</comment>
<comment type="interaction">
    <interactant intactId="EBI-10268010">
        <id>Q8N8X9</id>
    </interactant>
    <interactant intactId="EBI-769401">
        <id>Q8NBZ0</id>
        <label>INO80E</label>
    </interactant>
    <organismsDiffer>false</organismsDiffer>
    <experiments>3</experiments>
</comment>
<comment type="interaction">
    <interactant intactId="EBI-10268010">
        <id>Q8N8X9</id>
    </interactant>
    <interactant intactId="EBI-10172052">
        <id>P60411</id>
        <label>KRTAP10-9</label>
    </interactant>
    <organismsDiffer>false</organismsDiffer>
    <experiments>3</experiments>
</comment>
<comment type="interaction">
    <interactant intactId="EBI-10268010">
        <id>Q8N8X9</id>
    </interactant>
    <interactant intactId="EBI-739657">
        <id>Q9BQD3</id>
        <label>KXD1</label>
    </interactant>
    <organismsDiffer>false</organismsDiffer>
    <experiments>3</experiments>
</comment>
<comment type="interaction">
    <interactant intactId="EBI-10268010">
        <id>Q8N8X9</id>
    </interactant>
    <interactant intactId="EBI-20141748">
        <id>P52954</id>
        <label>LBX1</label>
    </interactant>
    <organismsDiffer>false</organismsDiffer>
    <experiments>3</experiments>
</comment>
<comment type="interaction">
    <interactant intactId="EBI-10268010">
        <id>Q8N8X9</id>
    </interactant>
    <interactant intactId="EBI-726510">
        <id>Q96BZ8</id>
        <label>LENG1</label>
    </interactant>
    <organismsDiffer>false</organismsDiffer>
    <experiments>3</experiments>
</comment>
<comment type="interaction">
    <interactant intactId="EBI-10268010">
        <id>Q8N8X9</id>
    </interactant>
    <interactant intactId="EBI-741037">
        <id>Q9BRK4</id>
        <label>LZTS2</label>
    </interactant>
    <organismsDiffer>false</organismsDiffer>
    <experiments>6</experiments>
</comment>
<comment type="interaction">
    <interactant intactId="EBI-10268010">
        <id>Q8N8X9</id>
    </interactant>
    <interactant intactId="EBI-394607">
        <id>Q9NPJ6</id>
        <label>MED4</label>
    </interactant>
    <organismsDiffer>false</organismsDiffer>
    <experiments>3</experiments>
</comment>
<comment type="interaction">
    <interactant intactId="EBI-10268010">
        <id>Q8N8X9</id>
    </interactant>
    <interactant intactId="EBI-741158">
        <id>Q96HA8</id>
        <label>NTAQ1</label>
    </interactant>
    <organismsDiffer>false</organismsDiffer>
    <experiments>3</experiments>
</comment>
<comment type="interaction">
    <interactant intactId="EBI-10268010">
        <id>Q8N8X9</id>
    </interactant>
    <interactant intactId="EBI-713786">
        <id>Q8IXK0</id>
        <label>PHC2</label>
    </interactant>
    <organismsDiffer>false</organismsDiffer>
    <experiments>3</experiments>
</comment>
<comment type="interaction">
    <interactant intactId="EBI-10268010">
        <id>Q8N8X9</id>
    </interactant>
    <interactant intactId="EBI-742688">
        <id>Q9NZD8</id>
        <label>SPG21</label>
    </interactant>
    <organismsDiffer>false</organismsDiffer>
    <experiments>3</experiments>
</comment>
<comment type="interaction">
    <interactant intactId="EBI-10268010">
        <id>Q8N8X9</id>
    </interactant>
    <interactant intactId="EBI-5235340">
        <id>Q7Z699</id>
        <label>SPRED1</label>
    </interactant>
    <organismsDiffer>false</organismsDiffer>
    <experiments>3</experiments>
</comment>
<comment type="interaction">
    <interactant intactId="EBI-10268010">
        <id>Q8N8X9</id>
    </interactant>
    <interactant intactId="EBI-745680">
        <id>Q96MF2</id>
        <label>STAC3</label>
    </interactant>
    <organismsDiffer>false</organismsDiffer>
    <experiments>7</experiments>
</comment>
<comment type="interaction">
    <interactant intactId="EBI-10268010">
        <id>Q8N8X9</id>
    </interactant>
    <interactant intactId="EBI-10176124">
        <id>B7ZLI8</id>
        <label>STK19</label>
    </interactant>
    <organismsDiffer>false</organismsDiffer>
    <experiments>3</experiments>
</comment>
<comment type="interaction">
    <interactant intactId="EBI-10268010">
        <id>Q8N8X9</id>
    </interactant>
    <interactant intactId="EBI-597063">
        <id>Q8TBK6</id>
        <label>ZCCHC10</label>
    </interactant>
    <organismsDiffer>false</organismsDiffer>
    <experiments>3</experiments>
</comment>
<comment type="interaction">
    <interactant intactId="EBI-10268010">
        <id>Q8N8X9</id>
    </interactant>
    <interactant intactId="EBI-741694">
        <id>P49910</id>
        <label>ZNF165</label>
    </interactant>
    <organismsDiffer>false</organismsDiffer>
    <experiments>3</experiments>
</comment>
<comment type="similarity">
    <text evidence="1">Belongs to the mab-21 family.</text>
</comment>
<protein>
    <recommendedName>
        <fullName>Protein mab-21-like 3</fullName>
    </recommendedName>
</protein>
<feature type="chain" id="PRO_0000286584" description="Protein mab-21-like 3">
    <location>
        <begin position="1"/>
        <end position="362"/>
    </location>
</feature>
<feature type="sequence conflict" description="In Ref. 1; BAC04682 and 3; AAI28150." evidence="1" ref="1 3">
    <original>T</original>
    <variation>A</variation>
    <location>
        <position position="338"/>
    </location>
</feature>
<keyword id="KW-1185">Reference proteome</keyword>
<reference key="1">
    <citation type="journal article" date="2004" name="Nat. Genet.">
        <title>Complete sequencing and characterization of 21,243 full-length human cDNAs.</title>
        <authorList>
            <person name="Ota T."/>
            <person name="Suzuki Y."/>
            <person name="Nishikawa T."/>
            <person name="Otsuki T."/>
            <person name="Sugiyama T."/>
            <person name="Irie R."/>
            <person name="Wakamatsu A."/>
            <person name="Hayashi K."/>
            <person name="Sato H."/>
            <person name="Nagai K."/>
            <person name="Kimura K."/>
            <person name="Makita H."/>
            <person name="Sekine M."/>
            <person name="Obayashi M."/>
            <person name="Nishi T."/>
            <person name="Shibahara T."/>
            <person name="Tanaka T."/>
            <person name="Ishii S."/>
            <person name="Yamamoto J."/>
            <person name="Saito K."/>
            <person name="Kawai Y."/>
            <person name="Isono Y."/>
            <person name="Nakamura Y."/>
            <person name="Nagahari K."/>
            <person name="Murakami K."/>
            <person name="Yasuda T."/>
            <person name="Iwayanagi T."/>
            <person name="Wagatsuma M."/>
            <person name="Shiratori A."/>
            <person name="Sudo H."/>
            <person name="Hosoiri T."/>
            <person name="Kaku Y."/>
            <person name="Kodaira H."/>
            <person name="Kondo H."/>
            <person name="Sugawara M."/>
            <person name="Takahashi M."/>
            <person name="Kanda K."/>
            <person name="Yokoi T."/>
            <person name="Furuya T."/>
            <person name="Kikkawa E."/>
            <person name="Omura Y."/>
            <person name="Abe K."/>
            <person name="Kamihara K."/>
            <person name="Katsuta N."/>
            <person name="Sato K."/>
            <person name="Tanikawa M."/>
            <person name="Yamazaki M."/>
            <person name="Ninomiya K."/>
            <person name="Ishibashi T."/>
            <person name="Yamashita H."/>
            <person name="Murakawa K."/>
            <person name="Fujimori K."/>
            <person name="Tanai H."/>
            <person name="Kimata M."/>
            <person name="Watanabe M."/>
            <person name="Hiraoka S."/>
            <person name="Chiba Y."/>
            <person name="Ishida S."/>
            <person name="Ono Y."/>
            <person name="Takiguchi S."/>
            <person name="Watanabe S."/>
            <person name="Yosida M."/>
            <person name="Hotuta T."/>
            <person name="Kusano J."/>
            <person name="Kanehori K."/>
            <person name="Takahashi-Fujii A."/>
            <person name="Hara H."/>
            <person name="Tanase T.-O."/>
            <person name="Nomura Y."/>
            <person name="Togiya S."/>
            <person name="Komai F."/>
            <person name="Hara R."/>
            <person name="Takeuchi K."/>
            <person name="Arita M."/>
            <person name="Imose N."/>
            <person name="Musashino K."/>
            <person name="Yuuki H."/>
            <person name="Oshima A."/>
            <person name="Sasaki N."/>
            <person name="Aotsuka S."/>
            <person name="Yoshikawa Y."/>
            <person name="Matsunawa H."/>
            <person name="Ichihara T."/>
            <person name="Shiohata N."/>
            <person name="Sano S."/>
            <person name="Moriya S."/>
            <person name="Momiyama H."/>
            <person name="Satoh N."/>
            <person name="Takami S."/>
            <person name="Terashima Y."/>
            <person name="Suzuki O."/>
            <person name="Nakagawa S."/>
            <person name="Senoh A."/>
            <person name="Mizoguchi H."/>
            <person name="Goto Y."/>
            <person name="Shimizu F."/>
            <person name="Wakebe H."/>
            <person name="Hishigaki H."/>
            <person name="Watanabe T."/>
            <person name="Sugiyama A."/>
            <person name="Takemoto M."/>
            <person name="Kawakami B."/>
            <person name="Yamazaki M."/>
            <person name="Watanabe K."/>
            <person name="Kumagai A."/>
            <person name="Itakura S."/>
            <person name="Fukuzumi Y."/>
            <person name="Fujimori Y."/>
            <person name="Komiyama M."/>
            <person name="Tashiro H."/>
            <person name="Tanigami A."/>
            <person name="Fujiwara T."/>
            <person name="Ono T."/>
            <person name="Yamada K."/>
            <person name="Fujii Y."/>
            <person name="Ozaki K."/>
            <person name="Hirao M."/>
            <person name="Ohmori Y."/>
            <person name="Kawabata A."/>
            <person name="Hikiji T."/>
            <person name="Kobatake N."/>
            <person name="Inagaki H."/>
            <person name="Ikema Y."/>
            <person name="Okamoto S."/>
            <person name="Okitani R."/>
            <person name="Kawakami T."/>
            <person name="Noguchi S."/>
            <person name="Itoh T."/>
            <person name="Shigeta K."/>
            <person name="Senba T."/>
            <person name="Matsumura K."/>
            <person name="Nakajima Y."/>
            <person name="Mizuno T."/>
            <person name="Morinaga M."/>
            <person name="Sasaki M."/>
            <person name="Togashi T."/>
            <person name="Oyama M."/>
            <person name="Hata H."/>
            <person name="Watanabe M."/>
            <person name="Komatsu T."/>
            <person name="Mizushima-Sugano J."/>
            <person name="Satoh T."/>
            <person name="Shirai Y."/>
            <person name="Takahashi Y."/>
            <person name="Nakagawa K."/>
            <person name="Okumura K."/>
            <person name="Nagase T."/>
            <person name="Nomura N."/>
            <person name="Kikuchi H."/>
            <person name="Masuho Y."/>
            <person name="Yamashita R."/>
            <person name="Nakai K."/>
            <person name="Yada T."/>
            <person name="Nakamura Y."/>
            <person name="Ohara O."/>
            <person name="Isogai T."/>
            <person name="Sugano S."/>
        </authorList>
    </citation>
    <scope>NUCLEOTIDE SEQUENCE [LARGE SCALE MRNA]</scope>
    <source>
        <tissue>Kidney</tissue>
    </source>
</reference>
<reference key="2">
    <citation type="journal article" date="2006" name="Nature">
        <title>The DNA sequence and biological annotation of human chromosome 1.</title>
        <authorList>
            <person name="Gregory S.G."/>
            <person name="Barlow K.F."/>
            <person name="McLay K.E."/>
            <person name="Kaul R."/>
            <person name="Swarbreck D."/>
            <person name="Dunham A."/>
            <person name="Scott C.E."/>
            <person name="Howe K.L."/>
            <person name="Woodfine K."/>
            <person name="Spencer C.C.A."/>
            <person name="Jones M.C."/>
            <person name="Gillson C."/>
            <person name="Searle S."/>
            <person name="Zhou Y."/>
            <person name="Kokocinski F."/>
            <person name="McDonald L."/>
            <person name="Evans R."/>
            <person name="Phillips K."/>
            <person name="Atkinson A."/>
            <person name="Cooper R."/>
            <person name="Jones C."/>
            <person name="Hall R.E."/>
            <person name="Andrews T.D."/>
            <person name="Lloyd C."/>
            <person name="Ainscough R."/>
            <person name="Almeida J.P."/>
            <person name="Ambrose K.D."/>
            <person name="Anderson F."/>
            <person name="Andrew R.W."/>
            <person name="Ashwell R.I.S."/>
            <person name="Aubin K."/>
            <person name="Babbage A.K."/>
            <person name="Bagguley C.L."/>
            <person name="Bailey J."/>
            <person name="Beasley H."/>
            <person name="Bethel G."/>
            <person name="Bird C.P."/>
            <person name="Bray-Allen S."/>
            <person name="Brown J.Y."/>
            <person name="Brown A.J."/>
            <person name="Buckley D."/>
            <person name="Burton J."/>
            <person name="Bye J."/>
            <person name="Carder C."/>
            <person name="Chapman J.C."/>
            <person name="Clark S.Y."/>
            <person name="Clarke G."/>
            <person name="Clee C."/>
            <person name="Cobley V."/>
            <person name="Collier R.E."/>
            <person name="Corby N."/>
            <person name="Coville G.J."/>
            <person name="Davies J."/>
            <person name="Deadman R."/>
            <person name="Dunn M."/>
            <person name="Earthrowl M."/>
            <person name="Ellington A.G."/>
            <person name="Errington H."/>
            <person name="Frankish A."/>
            <person name="Frankland J."/>
            <person name="French L."/>
            <person name="Garner P."/>
            <person name="Garnett J."/>
            <person name="Gay L."/>
            <person name="Ghori M.R.J."/>
            <person name="Gibson R."/>
            <person name="Gilby L.M."/>
            <person name="Gillett W."/>
            <person name="Glithero R.J."/>
            <person name="Grafham D.V."/>
            <person name="Griffiths C."/>
            <person name="Griffiths-Jones S."/>
            <person name="Grocock R."/>
            <person name="Hammond S."/>
            <person name="Harrison E.S.I."/>
            <person name="Hart E."/>
            <person name="Haugen E."/>
            <person name="Heath P.D."/>
            <person name="Holmes S."/>
            <person name="Holt K."/>
            <person name="Howden P.J."/>
            <person name="Hunt A.R."/>
            <person name="Hunt S.E."/>
            <person name="Hunter G."/>
            <person name="Isherwood J."/>
            <person name="James R."/>
            <person name="Johnson C."/>
            <person name="Johnson D."/>
            <person name="Joy A."/>
            <person name="Kay M."/>
            <person name="Kershaw J.K."/>
            <person name="Kibukawa M."/>
            <person name="Kimberley A.M."/>
            <person name="King A."/>
            <person name="Knights A.J."/>
            <person name="Lad H."/>
            <person name="Laird G."/>
            <person name="Lawlor S."/>
            <person name="Leongamornlert D.A."/>
            <person name="Lloyd D.M."/>
            <person name="Loveland J."/>
            <person name="Lovell J."/>
            <person name="Lush M.J."/>
            <person name="Lyne R."/>
            <person name="Martin S."/>
            <person name="Mashreghi-Mohammadi M."/>
            <person name="Matthews L."/>
            <person name="Matthews N.S.W."/>
            <person name="McLaren S."/>
            <person name="Milne S."/>
            <person name="Mistry S."/>
            <person name="Moore M.J.F."/>
            <person name="Nickerson T."/>
            <person name="O'Dell C.N."/>
            <person name="Oliver K."/>
            <person name="Palmeiri A."/>
            <person name="Palmer S.A."/>
            <person name="Parker A."/>
            <person name="Patel D."/>
            <person name="Pearce A.V."/>
            <person name="Peck A.I."/>
            <person name="Pelan S."/>
            <person name="Phelps K."/>
            <person name="Phillimore B.J."/>
            <person name="Plumb R."/>
            <person name="Rajan J."/>
            <person name="Raymond C."/>
            <person name="Rouse G."/>
            <person name="Saenphimmachak C."/>
            <person name="Sehra H.K."/>
            <person name="Sheridan E."/>
            <person name="Shownkeen R."/>
            <person name="Sims S."/>
            <person name="Skuce C.D."/>
            <person name="Smith M."/>
            <person name="Steward C."/>
            <person name="Subramanian S."/>
            <person name="Sycamore N."/>
            <person name="Tracey A."/>
            <person name="Tromans A."/>
            <person name="Van Helmond Z."/>
            <person name="Wall M."/>
            <person name="Wallis J.M."/>
            <person name="White S."/>
            <person name="Whitehead S.L."/>
            <person name="Wilkinson J.E."/>
            <person name="Willey D.L."/>
            <person name="Williams H."/>
            <person name="Wilming L."/>
            <person name="Wray P.W."/>
            <person name="Wu Z."/>
            <person name="Coulson A."/>
            <person name="Vaudin M."/>
            <person name="Sulston J.E."/>
            <person name="Durbin R.M."/>
            <person name="Hubbard T."/>
            <person name="Wooster R."/>
            <person name="Dunham I."/>
            <person name="Carter N.P."/>
            <person name="McVean G."/>
            <person name="Ross M.T."/>
            <person name="Harrow J."/>
            <person name="Olson M.V."/>
            <person name="Beck S."/>
            <person name="Rogers J."/>
            <person name="Bentley D.R."/>
        </authorList>
    </citation>
    <scope>NUCLEOTIDE SEQUENCE [LARGE SCALE GENOMIC DNA]</scope>
</reference>
<reference key="3">
    <citation type="journal article" date="2004" name="Genome Res.">
        <title>The status, quality, and expansion of the NIH full-length cDNA project: the Mammalian Gene Collection (MGC).</title>
        <authorList>
            <consortium name="The MGC Project Team"/>
        </authorList>
    </citation>
    <scope>NUCLEOTIDE SEQUENCE [LARGE SCALE MRNA]</scope>
</reference>
<name>MB213_HUMAN</name>
<accession>Q8N8X9</accession>
<accession>Q5TDL7</accession>
<organism>
    <name type="scientific">Homo sapiens</name>
    <name type="common">Human</name>
    <dbReference type="NCBI Taxonomy" id="9606"/>
    <lineage>
        <taxon>Eukaryota</taxon>
        <taxon>Metazoa</taxon>
        <taxon>Chordata</taxon>
        <taxon>Craniata</taxon>
        <taxon>Vertebrata</taxon>
        <taxon>Euteleostomi</taxon>
        <taxon>Mammalia</taxon>
        <taxon>Eutheria</taxon>
        <taxon>Euarchontoglires</taxon>
        <taxon>Primates</taxon>
        <taxon>Haplorrhini</taxon>
        <taxon>Catarrhini</taxon>
        <taxon>Hominidae</taxon>
        <taxon>Homo</taxon>
    </lineage>
</organism>
<gene>
    <name type="primary">MAB21L3</name>
    <name type="synonym">C1orf161</name>
</gene>
<dbReference type="EMBL" id="AK096035">
    <property type="protein sequence ID" value="BAC04682.1"/>
    <property type="molecule type" value="mRNA"/>
</dbReference>
<dbReference type="EMBL" id="AL121982">
    <property type="status" value="NOT_ANNOTATED_CDS"/>
    <property type="molecule type" value="Genomic_DNA"/>
</dbReference>
<dbReference type="EMBL" id="BC128148">
    <property type="protein sequence ID" value="AAI28149.1"/>
    <property type="molecule type" value="mRNA"/>
</dbReference>
<dbReference type="EMBL" id="BC128149">
    <property type="protein sequence ID" value="AAI28150.1"/>
    <property type="molecule type" value="mRNA"/>
</dbReference>
<dbReference type="CCDS" id="CCDS886.1"/>
<dbReference type="RefSeq" id="NP_689580.2">
    <property type="nucleotide sequence ID" value="NM_152367.3"/>
</dbReference>
<dbReference type="RefSeq" id="XP_011538925.1">
    <property type="nucleotide sequence ID" value="XM_011540623.2"/>
</dbReference>
<dbReference type="RefSeq" id="XP_011538927.1">
    <property type="nucleotide sequence ID" value="XM_011540625.2"/>
</dbReference>
<dbReference type="RefSeq" id="XP_011538928.1">
    <property type="nucleotide sequence ID" value="XM_011540626.2"/>
</dbReference>
<dbReference type="RefSeq" id="XP_016855749.1">
    <property type="nucleotide sequence ID" value="XM_017000260.1"/>
</dbReference>
<dbReference type="RefSeq" id="XP_047300779.1">
    <property type="nucleotide sequence ID" value="XM_047444823.1"/>
</dbReference>
<dbReference type="RefSeq" id="XP_054190252.1">
    <property type="nucleotide sequence ID" value="XM_054334277.1"/>
</dbReference>
<dbReference type="SMR" id="Q8N8X9"/>
<dbReference type="BioGRID" id="126023">
    <property type="interactions" value="41"/>
</dbReference>
<dbReference type="FunCoup" id="Q8N8X9">
    <property type="interactions" value="26"/>
</dbReference>
<dbReference type="IntAct" id="Q8N8X9">
    <property type="interactions" value="29"/>
</dbReference>
<dbReference type="STRING" id="9606.ENSP00000358512"/>
<dbReference type="GlyGen" id="Q8N8X9">
    <property type="glycosylation" value="2 sites, 1 O-linked glycan (2 sites)"/>
</dbReference>
<dbReference type="iPTMnet" id="Q8N8X9"/>
<dbReference type="BioMuta" id="MAB21L3"/>
<dbReference type="DMDM" id="147742988"/>
<dbReference type="MassIVE" id="Q8N8X9"/>
<dbReference type="PaxDb" id="9606-ENSP00000358512"/>
<dbReference type="ProteomicsDB" id="72471"/>
<dbReference type="Antibodypedia" id="49064">
    <property type="antibodies" value="108 antibodies from 10 providers"/>
</dbReference>
<dbReference type="DNASU" id="126868"/>
<dbReference type="Ensembl" id="ENST00000369500.4">
    <property type="protein sequence ID" value="ENSP00000358512.3"/>
    <property type="gene ID" value="ENSG00000173212.5"/>
</dbReference>
<dbReference type="Ensembl" id="ENST00000683341.1">
    <property type="protein sequence ID" value="ENSP00000508049.1"/>
    <property type="gene ID" value="ENSG00000173212.5"/>
</dbReference>
<dbReference type="Ensembl" id="ENST00000684484.1">
    <property type="protein sequence ID" value="ENSP00000506754.1"/>
    <property type="gene ID" value="ENSG00000173212.5"/>
</dbReference>
<dbReference type="GeneID" id="126868"/>
<dbReference type="KEGG" id="hsa:126868"/>
<dbReference type="MANE-Select" id="ENST00000369500.4">
    <property type="protein sequence ID" value="ENSP00000358512.3"/>
    <property type="RefSeq nucleotide sequence ID" value="NM_152367.3"/>
    <property type="RefSeq protein sequence ID" value="NP_689580.2"/>
</dbReference>
<dbReference type="UCSC" id="uc001egc.1">
    <property type="organism name" value="human"/>
</dbReference>
<dbReference type="AGR" id="HGNC:26787"/>
<dbReference type="CTD" id="126868"/>
<dbReference type="GeneCards" id="MAB21L3"/>
<dbReference type="HGNC" id="HGNC:26787">
    <property type="gene designation" value="MAB21L3"/>
</dbReference>
<dbReference type="HPA" id="ENSG00000173212">
    <property type="expression patterns" value="Tissue enhanced (retina)"/>
</dbReference>
<dbReference type="neXtProt" id="NX_Q8N8X9"/>
<dbReference type="OpenTargets" id="ENSG00000173212"/>
<dbReference type="PharmGKB" id="PA142672412"/>
<dbReference type="VEuPathDB" id="HostDB:ENSG00000173212"/>
<dbReference type="eggNOG" id="KOG3963">
    <property type="taxonomic scope" value="Eukaryota"/>
</dbReference>
<dbReference type="GeneTree" id="ENSGT01050000244827"/>
<dbReference type="HOGENOM" id="CLU_045315_1_0_1"/>
<dbReference type="InParanoid" id="Q8N8X9"/>
<dbReference type="OMA" id="WSKKARW"/>
<dbReference type="OrthoDB" id="5947963at2759"/>
<dbReference type="PAN-GO" id="Q8N8X9">
    <property type="GO annotations" value="0 GO annotations based on evolutionary models"/>
</dbReference>
<dbReference type="PhylomeDB" id="Q8N8X9"/>
<dbReference type="TreeFam" id="TF315012"/>
<dbReference type="PathwayCommons" id="Q8N8X9"/>
<dbReference type="SignaLink" id="Q8N8X9"/>
<dbReference type="BioGRID-ORCS" id="126868">
    <property type="hits" value="8 hits in 1150 CRISPR screens"/>
</dbReference>
<dbReference type="ChiTaRS" id="MAB21L3">
    <property type="organism name" value="human"/>
</dbReference>
<dbReference type="GenomeRNAi" id="126868"/>
<dbReference type="Pharos" id="Q8N8X9">
    <property type="development level" value="Tdark"/>
</dbReference>
<dbReference type="PRO" id="PR:Q8N8X9"/>
<dbReference type="Proteomes" id="UP000005640">
    <property type="component" value="Chromosome 1"/>
</dbReference>
<dbReference type="RNAct" id="Q8N8X9">
    <property type="molecule type" value="protein"/>
</dbReference>
<dbReference type="Bgee" id="ENSG00000173212">
    <property type="expression patterns" value="Expressed in esophagus squamous epithelium and 64 other cell types or tissues"/>
</dbReference>
<dbReference type="Gene3D" id="1.10.1410.40">
    <property type="match status" value="1"/>
</dbReference>
<dbReference type="Gene3D" id="3.30.460.90">
    <property type="match status" value="1"/>
</dbReference>
<dbReference type="InterPro" id="IPR046903">
    <property type="entry name" value="Mab-21-like_nuc_Trfase"/>
</dbReference>
<dbReference type="InterPro" id="IPR046906">
    <property type="entry name" value="Mab-21_HhH/H2TH-like"/>
</dbReference>
<dbReference type="InterPro" id="IPR024810">
    <property type="entry name" value="MAB21L/cGLR"/>
</dbReference>
<dbReference type="PANTHER" id="PTHR10656">
    <property type="entry name" value="CELL FATE DETERMINING PROTEIN MAB21-RELATED"/>
    <property type="match status" value="1"/>
</dbReference>
<dbReference type="PANTHER" id="PTHR10656:SF30">
    <property type="entry name" value="PROTEIN MAB-21-LIKE 3"/>
    <property type="match status" value="1"/>
</dbReference>
<dbReference type="Pfam" id="PF03281">
    <property type="entry name" value="Mab-21"/>
    <property type="match status" value="1"/>
</dbReference>
<dbReference type="Pfam" id="PF20266">
    <property type="entry name" value="Mab-21_C"/>
    <property type="match status" value="1"/>
</dbReference>
<dbReference type="SMART" id="SM01265">
    <property type="entry name" value="Mab-21"/>
    <property type="match status" value="1"/>
</dbReference>
<sequence length="362" mass="42357">MKYLTVGDLEDCLLNKVDLRRQQISQAVEEVQKVVHHLTTNISNQDIRFQAVPYSDTYNENIKVLAPSQFLVTVPIKGLAGYREAREQHWRYYTLQGTRLPCPLRDPEGLQQWLEVEQFMKSLWQWHETDVNIDGDIVPAKVLLVFRKLVENAVRTCHLSGKVSLLGNRSAVWVAVETSAYQVELELVPAVEIPTTWSKKARWPRCLQRWPSQERVECIKSFGFNLLACSNYHWQLSFLRAEQVLLEQLDEDGGCRRKCFQVMRHLKEDIWCPGNRPVITSHHLQTVLFWTCEKYPHFKDWQVFSKAFLRLVRKLHKCVSQHFLKHYFVRNSNLFQCTNPTELDTVAQKLATFLKNPQIGPP</sequence>
<evidence type="ECO:0000305" key="1"/>
<proteinExistence type="evidence at protein level"/>